<feature type="chain" id="PRO_0000088634" description="Photosystem I P700 chlorophyll a apoprotein A2">
    <location>
        <begin position="1"/>
        <end position="734"/>
    </location>
</feature>
<feature type="transmembrane region" description="Helical; Name=I" evidence="1">
    <location>
        <begin position="46"/>
        <end position="69"/>
    </location>
</feature>
<feature type="transmembrane region" description="Helical; Name=II" evidence="1">
    <location>
        <begin position="135"/>
        <end position="158"/>
    </location>
</feature>
<feature type="transmembrane region" description="Helical; Name=III" evidence="1">
    <location>
        <begin position="175"/>
        <end position="199"/>
    </location>
</feature>
<feature type="transmembrane region" description="Helical; Name=IV" evidence="1">
    <location>
        <begin position="273"/>
        <end position="291"/>
    </location>
</feature>
<feature type="transmembrane region" description="Helical; Name=V" evidence="1">
    <location>
        <begin position="330"/>
        <end position="353"/>
    </location>
</feature>
<feature type="transmembrane region" description="Helical; Name=VI" evidence="1">
    <location>
        <begin position="369"/>
        <end position="395"/>
    </location>
</feature>
<feature type="transmembrane region" description="Helical; Name=VII" evidence="1">
    <location>
        <begin position="417"/>
        <end position="439"/>
    </location>
</feature>
<feature type="transmembrane region" description="Helical; Name=VIII" evidence="1">
    <location>
        <begin position="517"/>
        <end position="535"/>
    </location>
</feature>
<feature type="transmembrane region" description="Helical; Name=IX" evidence="1">
    <location>
        <begin position="575"/>
        <end position="596"/>
    </location>
</feature>
<feature type="transmembrane region" description="Helical; Name=X" evidence="1">
    <location>
        <begin position="643"/>
        <end position="665"/>
    </location>
</feature>
<feature type="transmembrane region" description="Helical; Name=XI" evidence="1">
    <location>
        <begin position="707"/>
        <end position="727"/>
    </location>
</feature>
<feature type="binding site" evidence="1">
    <location>
        <position position="559"/>
    </location>
    <ligand>
        <name>[4Fe-4S] cluster</name>
        <dbReference type="ChEBI" id="CHEBI:49883"/>
        <note>ligand shared between dimeric partners</note>
    </ligand>
</feature>
<feature type="binding site" evidence="1">
    <location>
        <position position="568"/>
    </location>
    <ligand>
        <name>[4Fe-4S] cluster</name>
        <dbReference type="ChEBI" id="CHEBI:49883"/>
        <note>ligand shared between dimeric partners</note>
    </ligand>
</feature>
<feature type="binding site" description="axial binding residue" evidence="1">
    <location>
        <position position="654"/>
    </location>
    <ligand>
        <name>chlorophyll a</name>
        <dbReference type="ChEBI" id="CHEBI:58416"/>
        <label>B1</label>
    </ligand>
    <ligandPart>
        <name>Mg</name>
        <dbReference type="ChEBI" id="CHEBI:25107"/>
    </ligandPart>
</feature>
<feature type="binding site" description="axial binding residue" evidence="1">
    <location>
        <position position="662"/>
    </location>
    <ligand>
        <name>chlorophyll a</name>
        <dbReference type="ChEBI" id="CHEBI:58416"/>
        <label>B3</label>
    </ligand>
    <ligandPart>
        <name>Mg</name>
        <dbReference type="ChEBI" id="CHEBI:25107"/>
    </ligandPart>
</feature>
<feature type="binding site" evidence="1">
    <location>
        <position position="670"/>
    </location>
    <ligand>
        <name>chlorophyll a</name>
        <dbReference type="ChEBI" id="CHEBI:58416"/>
        <label>B3</label>
    </ligand>
</feature>
<feature type="binding site" evidence="1">
    <location>
        <position position="671"/>
    </location>
    <ligand>
        <name>phylloquinone</name>
        <dbReference type="ChEBI" id="CHEBI:18067"/>
        <label>B</label>
    </ligand>
</feature>
<comment type="function">
    <text evidence="1">PsaA and PsaB bind P700, the primary electron donor of photosystem I (PSI), as well as the electron acceptors A0, A1 and FX. PSI is a plastocyanin/cytochrome c6-ferredoxin oxidoreductase, converting photonic excitation into a charge separation, which transfers an electron from the donor P700 chlorophyll pair to the spectroscopically characterized acceptors A0, A1, FX, FA and FB in turn. Oxidized P700 is reduced on the lumenal side of the thylakoid membrane by plastocyanin or cytochrome c6.</text>
</comment>
<comment type="catalytic activity">
    <reaction evidence="1">
        <text>reduced [plastocyanin] + hnu + oxidized [2Fe-2S]-[ferredoxin] = oxidized [plastocyanin] + reduced [2Fe-2S]-[ferredoxin]</text>
        <dbReference type="Rhea" id="RHEA:30407"/>
        <dbReference type="Rhea" id="RHEA-COMP:10000"/>
        <dbReference type="Rhea" id="RHEA-COMP:10001"/>
        <dbReference type="Rhea" id="RHEA-COMP:10039"/>
        <dbReference type="Rhea" id="RHEA-COMP:10040"/>
        <dbReference type="ChEBI" id="CHEBI:29036"/>
        <dbReference type="ChEBI" id="CHEBI:30212"/>
        <dbReference type="ChEBI" id="CHEBI:33737"/>
        <dbReference type="ChEBI" id="CHEBI:33738"/>
        <dbReference type="ChEBI" id="CHEBI:49552"/>
        <dbReference type="EC" id="1.97.1.12"/>
    </reaction>
</comment>
<comment type="cofactor">
    <text evidence="1">P700 is a chlorophyll a/chlorophyll a' dimer, A0 is one or more chlorophyll a, A1 is one or both phylloquinones and FX is a shared 4Fe-4S iron-sulfur center.</text>
</comment>
<comment type="subunit">
    <text evidence="1">The PsaA/B heterodimer binds the P700 chlorophyll special pair and subsequent electron acceptors. PSI consists of a core antenna complex that captures photons, and an electron transfer chain that converts photonic excitation into a charge separation. The eukaryotic PSI reaction center is composed of at least 11 subunits.</text>
</comment>
<comment type="subcellular location">
    <subcellularLocation>
        <location evidence="1">Plastid</location>
        <location evidence="1">Chloroplast thylakoid membrane</location>
        <topology evidence="1">Multi-pass membrane protein</topology>
    </subcellularLocation>
</comment>
<comment type="similarity">
    <text evidence="1">Belongs to the PsaA/PsaB family.</text>
</comment>
<geneLocation type="chloroplast"/>
<name>PSAB_PORPU</name>
<accession>P51285</accession>
<keyword id="KW-0004">4Fe-4S</keyword>
<keyword id="KW-0148">Chlorophyll</keyword>
<keyword id="KW-0150">Chloroplast</keyword>
<keyword id="KW-0157">Chromophore</keyword>
<keyword id="KW-0249">Electron transport</keyword>
<keyword id="KW-0408">Iron</keyword>
<keyword id="KW-0411">Iron-sulfur</keyword>
<keyword id="KW-0460">Magnesium</keyword>
<keyword id="KW-0472">Membrane</keyword>
<keyword id="KW-0479">Metal-binding</keyword>
<keyword id="KW-0560">Oxidoreductase</keyword>
<keyword id="KW-0602">Photosynthesis</keyword>
<keyword id="KW-0603">Photosystem I</keyword>
<keyword id="KW-0934">Plastid</keyword>
<keyword id="KW-0793">Thylakoid</keyword>
<keyword id="KW-0812">Transmembrane</keyword>
<keyword id="KW-1133">Transmembrane helix</keyword>
<keyword id="KW-0813">Transport</keyword>
<evidence type="ECO:0000255" key="1">
    <source>
        <dbReference type="HAMAP-Rule" id="MF_00482"/>
    </source>
</evidence>
<reference key="1">
    <citation type="journal article" date="1995" name="Plant Mol. Biol. Rep.">
        <title>Complete nucleotide sequence of the Porphyra purpurea chloroplast genome.</title>
        <authorList>
            <person name="Reith M.E."/>
            <person name="Munholland J."/>
        </authorList>
    </citation>
    <scope>NUCLEOTIDE SEQUENCE [LARGE SCALE GENOMIC DNA]</scope>
    <source>
        <strain>Avonport</strain>
    </source>
</reference>
<proteinExistence type="inferred from homology"/>
<gene>
    <name evidence="1" type="primary">psaB</name>
</gene>
<dbReference type="EC" id="1.97.1.12" evidence="1"/>
<dbReference type="EMBL" id="U38804">
    <property type="protein sequence ID" value="AAC08171.1"/>
    <property type="molecule type" value="Genomic_DNA"/>
</dbReference>
<dbReference type="PIR" id="S73206">
    <property type="entry name" value="S73206"/>
</dbReference>
<dbReference type="RefSeq" id="NP_053895.1">
    <property type="nucleotide sequence ID" value="NC_000925.1"/>
</dbReference>
<dbReference type="SMR" id="P51285"/>
<dbReference type="GeneID" id="809914"/>
<dbReference type="GO" id="GO:0009535">
    <property type="term" value="C:chloroplast thylakoid membrane"/>
    <property type="evidence" value="ECO:0007669"/>
    <property type="project" value="UniProtKB-SubCell"/>
</dbReference>
<dbReference type="GO" id="GO:0009522">
    <property type="term" value="C:photosystem I"/>
    <property type="evidence" value="ECO:0007669"/>
    <property type="project" value="UniProtKB-KW"/>
</dbReference>
<dbReference type="GO" id="GO:0051539">
    <property type="term" value="F:4 iron, 4 sulfur cluster binding"/>
    <property type="evidence" value="ECO:0007669"/>
    <property type="project" value="UniProtKB-KW"/>
</dbReference>
<dbReference type="GO" id="GO:0016168">
    <property type="term" value="F:chlorophyll binding"/>
    <property type="evidence" value="ECO:0007669"/>
    <property type="project" value="UniProtKB-KW"/>
</dbReference>
<dbReference type="GO" id="GO:0009055">
    <property type="term" value="F:electron transfer activity"/>
    <property type="evidence" value="ECO:0007669"/>
    <property type="project" value="UniProtKB-UniRule"/>
</dbReference>
<dbReference type="GO" id="GO:0000287">
    <property type="term" value="F:magnesium ion binding"/>
    <property type="evidence" value="ECO:0007669"/>
    <property type="project" value="UniProtKB-UniRule"/>
</dbReference>
<dbReference type="GO" id="GO:0016491">
    <property type="term" value="F:oxidoreductase activity"/>
    <property type="evidence" value="ECO:0007669"/>
    <property type="project" value="UniProtKB-KW"/>
</dbReference>
<dbReference type="GO" id="GO:0015979">
    <property type="term" value="P:photosynthesis"/>
    <property type="evidence" value="ECO:0007669"/>
    <property type="project" value="UniProtKB-UniRule"/>
</dbReference>
<dbReference type="FunFam" id="1.20.1130.10:FF:000001">
    <property type="entry name" value="Photosystem I P700 chlorophyll a apoprotein A2"/>
    <property type="match status" value="1"/>
</dbReference>
<dbReference type="Gene3D" id="1.20.1130.10">
    <property type="entry name" value="Photosystem I PsaA/PsaB"/>
    <property type="match status" value="1"/>
</dbReference>
<dbReference type="HAMAP" id="MF_00482">
    <property type="entry name" value="PSI_PsaB"/>
    <property type="match status" value="1"/>
</dbReference>
<dbReference type="InterPro" id="IPR001280">
    <property type="entry name" value="PSI_PsaA/B"/>
</dbReference>
<dbReference type="InterPro" id="IPR020586">
    <property type="entry name" value="PSI_PsaA/B_CS"/>
</dbReference>
<dbReference type="InterPro" id="IPR036408">
    <property type="entry name" value="PSI_PsaA/B_sf"/>
</dbReference>
<dbReference type="InterPro" id="IPR006244">
    <property type="entry name" value="PSI_PsaB"/>
</dbReference>
<dbReference type="NCBIfam" id="TIGR01336">
    <property type="entry name" value="psaB"/>
    <property type="match status" value="1"/>
</dbReference>
<dbReference type="PANTHER" id="PTHR30128">
    <property type="entry name" value="OUTER MEMBRANE PROTEIN, OMPA-RELATED"/>
    <property type="match status" value="1"/>
</dbReference>
<dbReference type="PANTHER" id="PTHR30128:SF19">
    <property type="entry name" value="PHOTOSYSTEM I P700 CHLOROPHYLL A APOPROTEIN A1-RELATED"/>
    <property type="match status" value="1"/>
</dbReference>
<dbReference type="Pfam" id="PF00223">
    <property type="entry name" value="PsaA_PsaB"/>
    <property type="match status" value="1"/>
</dbReference>
<dbReference type="PIRSF" id="PIRSF002905">
    <property type="entry name" value="PSI_A"/>
    <property type="match status" value="1"/>
</dbReference>
<dbReference type="PRINTS" id="PR00257">
    <property type="entry name" value="PHOTSYSPSAAB"/>
</dbReference>
<dbReference type="SUPFAM" id="SSF81558">
    <property type="entry name" value="Photosystem I subunits PsaA/PsaB"/>
    <property type="match status" value="1"/>
</dbReference>
<dbReference type="PROSITE" id="PS00419">
    <property type="entry name" value="PHOTOSYSTEM_I_PSAAB"/>
    <property type="match status" value="1"/>
</dbReference>
<organism>
    <name type="scientific">Porphyra purpurea</name>
    <name type="common">Red seaweed</name>
    <name type="synonym">Ulva purpurea</name>
    <dbReference type="NCBI Taxonomy" id="2787"/>
    <lineage>
        <taxon>Eukaryota</taxon>
        <taxon>Rhodophyta</taxon>
        <taxon>Bangiophyceae</taxon>
        <taxon>Bangiales</taxon>
        <taxon>Bangiaceae</taxon>
        <taxon>Porphyra</taxon>
    </lineage>
</organism>
<protein>
    <recommendedName>
        <fullName evidence="1">Photosystem I P700 chlorophyll a apoprotein A2</fullName>
        <ecNumber evidence="1">1.97.1.12</ecNumber>
    </recommendedName>
    <alternativeName>
        <fullName evidence="1">PSI-B</fullName>
    </alternativeName>
    <alternativeName>
        <fullName evidence="1">PsaB</fullName>
    </alternativeName>
</protein>
<sequence length="734" mass="82182">MATKFPKFSQALSQDPTTRRIWYGIATAHDFESHDGMTEENLYQKIFASHFGHLAIIFLWTSGNLFHVAWQGNFEQWILNPLKVKPIAHAIWDPHFGQPALKAFSKGGSAYPVNIAYSGVYHWWYTIGMRTNQDLYTGALFLLVLSAILLFGGWLHLQPKFKPGLSWFKNNESRLNHHLSGLFGVSSLAWTGHLVHVAIPESRGQHVGWDNFTTVLPHPAGLQPFFSGNWSVYAQNPDTAQQLFGTNEGAGTAILTFLGGFHPQSQSLWLTDMAHHHLAIAVVFIVAGHMYRTNWGIGHNLKDILDAHRPPSGRLGAGHRGLFDTITNSLHMQLGLALAALGVITSLVAQHMYAMPPYAFMAKDFTTQASLYTHHQYIAGFLMVGAFAHGAIFFVRDYDPEQNKGNVLARMLEHKEAIISHLSWVTLFLGFHTLGLYVHNDTMIAFGTPEKQILIEPVFAQWIQASSGKALYGFDVLLSSSSNIATQAGSNIWLPGWLEAINSGKNSLFLTIGPGDFLVHHAIALGLHTTALILVKGALDARGSKLMPDKKDFGYSFPCDGPGRGGTCDISAWDAFYLAVFWMLNTIGWVTFYWHWKHITIWQGNATQFNESSTYLMGWFRDYLWLNSSPLINGYNPYGMNNLSVWSWMFLFGHLVWATGFMFLISWRGYWQELIETLAWAHERTPLANLIRWKDKPVAMSIVQARLVGLAHFSVGYVLTYAAFVLASTAGKFG</sequence>